<protein>
    <recommendedName>
        <fullName>Complement C1q tumor necrosis factor-related protein 6</fullName>
    </recommendedName>
</protein>
<evidence type="ECO:0000255" key="1"/>
<evidence type="ECO:0000255" key="2">
    <source>
        <dbReference type="PROSITE-ProRule" id="PRU00368"/>
    </source>
</evidence>
<evidence type="ECO:0000256" key="3">
    <source>
        <dbReference type="SAM" id="MobiDB-lite"/>
    </source>
</evidence>
<evidence type="ECO:0000305" key="4"/>
<comment type="subcellular location">
    <subcellularLocation>
        <location evidence="4">Secreted</location>
    </subcellularLocation>
</comment>
<accession>Q6IR41</accession>
<accession>Q8BKR0</accession>
<feature type="signal peptide" evidence="1">
    <location>
        <begin position="1"/>
        <end position="24"/>
    </location>
</feature>
<feature type="chain" id="PRO_0000320084" description="Complement C1q tumor necrosis factor-related protein 6">
    <location>
        <begin position="25"/>
        <end position="264"/>
    </location>
</feature>
<feature type="domain" description="Collagen-like">
    <location>
        <begin position="83"/>
        <end position="124"/>
    </location>
</feature>
<feature type="domain" description="C1q" evidence="2">
    <location>
        <begin position="125"/>
        <end position="264"/>
    </location>
</feature>
<feature type="region of interest" description="Disordered" evidence="3">
    <location>
        <begin position="81"/>
        <end position="125"/>
    </location>
</feature>
<feature type="compositionally biased region" description="Low complexity" evidence="3">
    <location>
        <begin position="90"/>
        <end position="100"/>
    </location>
</feature>
<feature type="glycosylation site" description="N-linked (GlcNAc...) asparagine" evidence="1">
    <location>
        <position position="77"/>
    </location>
</feature>
<feature type="sequence conflict" description="In Ref. 2; BAC34512." evidence="4" ref="2">
    <original>R</original>
    <variation>H</variation>
    <location>
        <position position="106"/>
    </location>
</feature>
<reference key="1">
    <citation type="journal article" date="2004" name="Proc. Natl. Acad. Sci. U.S.A.">
        <title>A family of Acrp30/adiponectin structural and functional paralogs.</title>
        <authorList>
            <person name="Wong G.W."/>
            <person name="Wang J."/>
            <person name="Hug C."/>
            <person name="Tsao T.S."/>
            <person name="Lodish H.F."/>
        </authorList>
    </citation>
    <scope>NUCLEOTIDE SEQUENCE [MRNA]</scope>
    <source>
        <strain>C57BL/6J</strain>
        <tissue>Adipose tissue</tissue>
    </source>
</reference>
<reference key="2">
    <citation type="journal article" date="2005" name="Science">
        <title>The transcriptional landscape of the mammalian genome.</title>
        <authorList>
            <person name="Carninci P."/>
            <person name="Kasukawa T."/>
            <person name="Katayama S."/>
            <person name="Gough J."/>
            <person name="Frith M.C."/>
            <person name="Maeda N."/>
            <person name="Oyama R."/>
            <person name="Ravasi T."/>
            <person name="Lenhard B."/>
            <person name="Wells C."/>
            <person name="Kodzius R."/>
            <person name="Shimokawa K."/>
            <person name="Bajic V.B."/>
            <person name="Brenner S.E."/>
            <person name="Batalov S."/>
            <person name="Forrest A.R."/>
            <person name="Zavolan M."/>
            <person name="Davis M.J."/>
            <person name="Wilming L.G."/>
            <person name="Aidinis V."/>
            <person name="Allen J.E."/>
            <person name="Ambesi-Impiombato A."/>
            <person name="Apweiler R."/>
            <person name="Aturaliya R.N."/>
            <person name="Bailey T.L."/>
            <person name="Bansal M."/>
            <person name="Baxter L."/>
            <person name="Beisel K.W."/>
            <person name="Bersano T."/>
            <person name="Bono H."/>
            <person name="Chalk A.M."/>
            <person name="Chiu K.P."/>
            <person name="Choudhary V."/>
            <person name="Christoffels A."/>
            <person name="Clutterbuck D.R."/>
            <person name="Crowe M.L."/>
            <person name="Dalla E."/>
            <person name="Dalrymple B.P."/>
            <person name="de Bono B."/>
            <person name="Della Gatta G."/>
            <person name="di Bernardo D."/>
            <person name="Down T."/>
            <person name="Engstrom P."/>
            <person name="Fagiolini M."/>
            <person name="Faulkner G."/>
            <person name="Fletcher C.F."/>
            <person name="Fukushima T."/>
            <person name="Furuno M."/>
            <person name="Futaki S."/>
            <person name="Gariboldi M."/>
            <person name="Georgii-Hemming P."/>
            <person name="Gingeras T.R."/>
            <person name="Gojobori T."/>
            <person name="Green R.E."/>
            <person name="Gustincich S."/>
            <person name="Harbers M."/>
            <person name="Hayashi Y."/>
            <person name="Hensch T.K."/>
            <person name="Hirokawa N."/>
            <person name="Hill D."/>
            <person name="Huminiecki L."/>
            <person name="Iacono M."/>
            <person name="Ikeo K."/>
            <person name="Iwama A."/>
            <person name="Ishikawa T."/>
            <person name="Jakt M."/>
            <person name="Kanapin A."/>
            <person name="Katoh M."/>
            <person name="Kawasawa Y."/>
            <person name="Kelso J."/>
            <person name="Kitamura H."/>
            <person name="Kitano H."/>
            <person name="Kollias G."/>
            <person name="Krishnan S.P."/>
            <person name="Kruger A."/>
            <person name="Kummerfeld S.K."/>
            <person name="Kurochkin I.V."/>
            <person name="Lareau L.F."/>
            <person name="Lazarevic D."/>
            <person name="Lipovich L."/>
            <person name="Liu J."/>
            <person name="Liuni S."/>
            <person name="McWilliam S."/>
            <person name="Madan Babu M."/>
            <person name="Madera M."/>
            <person name="Marchionni L."/>
            <person name="Matsuda H."/>
            <person name="Matsuzawa S."/>
            <person name="Miki H."/>
            <person name="Mignone F."/>
            <person name="Miyake S."/>
            <person name="Morris K."/>
            <person name="Mottagui-Tabar S."/>
            <person name="Mulder N."/>
            <person name="Nakano N."/>
            <person name="Nakauchi H."/>
            <person name="Ng P."/>
            <person name="Nilsson R."/>
            <person name="Nishiguchi S."/>
            <person name="Nishikawa S."/>
            <person name="Nori F."/>
            <person name="Ohara O."/>
            <person name="Okazaki Y."/>
            <person name="Orlando V."/>
            <person name="Pang K.C."/>
            <person name="Pavan W.J."/>
            <person name="Pavesi G."/>
            <person name="Pesole G."/>
            <person name="Petrovsky N."/>
            <person name="Piazza S."/>
            <person name="Reed J."/>
            <person name="Reid J.F."/>
            <person name="Ring B.Z."/>
            <person name="Ringwald M."/>
            <person name="Rost B."/>
            <person name="Ruan Y."/>
            <person name="Salzberg S.L."/>
            <person name="Sandelin A."/>
            <person name="Schneider C."/>
            <person name="Schoenbach C."/>
            <person name="Sekiguchi K."/>
            <person name="Semple C.A."/>
            <person name="Seno S."/>
            <person name="Sessa L."/>
            <person name="Sheng Y."/>
            <person name="Shibata Y."/>
            <person name="Shimada H."/>
            <person name="Shimada K."/>
            <person name="Silva D."/>
            <person name="Sinclair B."/>
            <person name="Sperling S."/>
            <person name="Stupka E."/>
            <person name="Sugiura K."/>
            <person name="Sultana R."/>
            <person name="Takenaka Y."/>
            <person name="Taki K."/>
            <person name="Tammoja K."/>
            <person name="Tan S.L."/>
            <person name="Tang S."/>
            <person name="Taylor M.S."/>
            <person name="Tegner J."/>
            <person name="Teichmann S.A."/>
            <person name="Ueda H.R."/>
            <person name="van Nimwegen E."/>
            <person name="Verardo R."/>
            <person name="Wei C.L."/>
            <person name="Yagi K."/>
            <person name="Yamanishi H."/>
            <person name="Zabarovsky E."/>
            <person name="Zhu S."/>
            <person name="Zimmer A."/>
            <person name="Hide W."/>
            <person name="Bult C."/>
            <person name="Grimmond S.M."/>
            <person name="Teasdale R.D."/>
            <person name="Liu E.T."/>
            <person name="Brusic V."/>
            <person name="Quackenbush J."/>
            <person name="Wahlestedt C."/>
            <person name="Mattick J.S."/>
            <person name="Hume D.A."/>
            <person name="Kai C."/>
            <person name="Sasaki D."/>
            <person name="Tomaru Y."/>
            <person name="Fukuda S."/>
            <person name="Kanamori-Katayama M."/>
            <person name="Suzuki M."/>
            <person name="Aoki J."/>
            <person name="Arakawa T."/>
            <person name="Iida J."/>
            <person name="Imamura K."/>
            <person name="Itoh M."/>
            <person name="Kato T."/>
            <person name="Kawaji H."/>
            <person name="Kawagashira N."/>
            <person name="Kawashima T."/>
            <person name="Kojima M."/>
            <person name="Kondo S."/>
            <person name="Konno H."/>
            <person name="Nakano K."/>
            <person name="Ninomiya N."/>
            <person name="Nishio T."/>
            <person name="Okada M."/>
            <person name="Plessy C."/>
            <person name="Shibata K."/>
            <person name="Shiraki T."/>
            <person name="Suzuki S."/>
            <person name="Tagami M."/>
            <person name="Waki K."/>
            <person name="Watahiki A."/>
            <person name="Okamura-Oho Y."/>
            <person name="Suzuki H."/>
            <person name="Kawai J."/>
            <person name="Hayashizaki Y."/>
        </authorList>
    </citation>
    <scope>NUCLEOTIDE SEQUENCE [LARGE SCALE MRNA]</scope>
    <source>
        <strain>C57BL/6J</strain>
        <strain>NOD</strain>
    </source>
</reference>
<reference key="3">
    <citation type="journal article" date="2009" name="PLoS Biol.">
        <title>Lineage-specific biology revealed by a finished genome assembly of the mouse.</title>
        <authorList>
            <person name="Church D.M."/>
            <person name="Goodstadt L."/>
            <person name="Hillier L.W."/>
            <person name="Zody M.C."/>
            <person name="Goldstein S."/>
            <person name="She X."/>
            <person name="Bult C.J."/>
            <person name="Agarwala R."/>
            <person name="Cherry J.L."/>
            <person name="DiCuccio M."/>
            <person name="Hlavina W."/>
            <person name="Kapustin Y."/>
            <person name="Meric P."/>
            <person name="Maglott D."/>
            <person name="Birtle Z."/>
            <person name="Marques A.C."/>
            <person name="Graves T."/>
            <person name="Zhou S."/>
            <person name="Teague B."/>
            <person name="Potamousis K."/>
            <person name="Churas C."/>
            <person name="Place M."/>
            <person name="Herschleb J."/>
            <person name="Runnheim R."/>
            <person name="Forrest D."/>
            <person name="Amos-Landgraf J."/>
            <person name="Schwartz D.C."/>
            <person name="Cheng Z."/>
            <person name="Lindblad-Toh K."/>
            <person name="Eichler E.E."/>
            <person name="Ponting C.P."/>
        </authorList>
    </citation>
    <scope>NUCLEOTIDE SEQUENCE [LARGE SCALE GENOMIC DNA]</scope>
    <source>
        <strain>C57BL/6J</strain>
    </source>
</reference>
<reference key="4">
    <citation type="journal article" date="2004" name="Genome Res.">
        <title>The status, quality, and expansion of the NIH full-length cDNA project: the Mammalian Gene Collection (MGC).</title>
        <authorList>
            <consortium name="The MGC Project Team"/>
        </authorList>
    </citation>
    <scope>NUCLEOTIDE SEQUENCE [LARGE SCALE MRNA]</scope>
    <source>
        <strain>FVB/N</strain>
        <tissue>Colon</tissue>
    </source>
</reference>
<keyword id="KW-0176">Collagen</keyword>
<keyword id="KW-0325">Glycoprotein</keyword>
<keyword id="KW-1185">Reference proteome</keyword>
<keyword id="KW-0964">Secreted</keyword>
<keyword id="KW-0732">Signal</keyword>
<sequence length="264" mass="29081">MRVIMGIASLGFLWAVFLLPLVFGVPTEETTFGESVASHLPKGCRRCCDPEDLMSSDDTVQAPVSPYVLPEVRPYINITILKGDKGDRGPTGTPGKPGKNGTRGDRGSQGVKGDKGQAGSPGSSCQTHYSAFSVGRKTGLHSSENFLSLLFDRVFVNTDGHFDMATGSFVAPLRGLYFFSLNVHSWNYKETYVHIVHNEQAVVILYAQPSERSIMQSQSVMLPLVPGDRVWVRLFKRERENGIYSDDVDTYITFSGHLIKAEDN</sequence>
<dbReference type="EMBL" id="DQ002399">
    <property type="protein sequence ID" value="AAY21931.1"/>
    <property type="molecule type" value="mRNA"/>
</dbReference>
<dbReference type="EMBL" id="AK051058">
    <property type="protein sequence ID" value="BAC34512.1"/>
    <property type="molecule type" value="mRNA"/>
</dbReference>
<dbReference type="EMBL" id="AK154407">
    <property type="protein sequence ID" value="BAE32564.1"/>
    <property type="molecule type" value="mRNA"/>
</dbReference>
<dbReference type="EMBL" id="AL590144">
    <property type="status" value="NOT_ANNOTATED_CDS"/>
    <property type="molecule type" value="Genomic_DNA"/>
</dbReference>
<dbReference type="EMBL" id="BC071187">
    <property type="protein sequence ID" value="AAH71187.1"/>
    <property type="molecule type" value="mRNA"/>
</dbReference>
<dbReference type="CCDS" id="CCDS37134.1"/>
<dbReference type="RefSeq" id="NP_082607.3">
    <property type="nucleotide sequence ID" value="NM_028331.5"/>
</dbReference>
<dbReference type="SMR" id="Q6IR41"/>
<dbReference type="FunCoup" id="Q6IR41">
    <property type="interactions" value="15"/>
</dbReference>
<dbReference type="STRING" id="10090.ENSMUSP00000023075"/>
<dbReference type="GlyCosmos" id="Q6IR41">
    <property type="glycosylation" value="1 site, No reported glycans"/>
</dbReference>
<dbReference type="GlyGen" id="Q6IR41">
    <property type="glycosylation" value="2 sites, 1 N-linked glycan (1 site)"/>
</dbReference>
<dbReference type="PhosphoSitePlus" id="Q6IR41"/>
<dbReference type="PaxDb" id="10090-ENSMUSP00000023075"/>
<dbReference type="ProteomicsDB" id="273805"/>
<dbReference type="Pumba" id="Q6IR41"/>
<dbReference type="Antibodypedia" id="1088">
    <property type="antibodies" value="273 antibodies from 31 providers"/>
</dbReference>
<dbReference type="DNASU" id="72709"/>
<dbReference type="Ensembl" id="ENSMUST00000023075.9">
    <property type="protein sequence ID" value="ENSMUSP00000023075.9"/>
    <property type="gene ID" value="ENSMUSG00000022440.10"/>
</dbReference>
<dbReference type="GeneID" id="72709"/>
<dbReference type="KEGG" id="mmu:72709"/>
<dbReference type="UCSC" id="uc007wpn.2">
    <property type="organism name" value="mouse"/>
</dbReference>
<dbReference type="AGR" id="MGI:1919959"/>
<dbReference type="CTD" id="114904"/>
<dbReference type="MGI" id="MGI:1919959">
    <property type="gene designation" value="C1qtnf6"/>
</dbReference>
<dbReference type="VEuPathDB" id="HostDB:ENSMUSG00000022440"/>
<dbReference type="eggNOG" id="ENOG502QT5D">
    <property type="taxonomic scope" value="Eukaryota"/>
</dbReference>
<dbReference type="GeneTree" id="ENSGT00940000160396"/>
<dbReference type="HOGENOM" id="CLU_001074_3_0_1"/>
<dbReference type="InParanoid" id="Q6IR41"/>
<dbReference type="OMA" id="GPCQTRF"/>
<dbReference type="OrthoDB" id="6138508at2759"/>
<dbReference type="PhylomeDB" id="Q6IR41"/>
<dbReference type="TreeFam" id="TF329591"/>
<dbReference type="BioGRID-ORCS" id="72709">
    <property type="hits" value="2 hits in 79 CRISPR screens"/>
</dbReference>
<dbReference type="ChiTaRS" id="C1qtnf6">
    <property type="organism name" value="mouse"/>
</dbReference>
<dbReference type="PRO" id="PR:Q6IR41"/>
<dbReference type="Proteomes" id="UP000000589">
    <property type="component" value="Chromosome 15"/>
</dbReference>
<dbReference type="RNAct" id="Q6IR41">
    <property type="molecule type" value="protein"/>
</dbReference>
<dbReference type="Bgee" id="ENSMUSG00000022440">
    <property type="expression patterns" value="Expressed in humerus cartilage element and 131 other cell types or tissues"/>
</dbReference>
<dbReference type="ExpressionAtlas" id="Q6IR41">
    <property type="expression patterns" value="baseline and differential"/>
</dbReference>
<dbReference type="GO" id="GO:0005581">
    <property type="term" value="C:collagen trimer"/>
    <property type="evidence" value="ECO:0007669"/>
    <property type="project" value="UniProtKB-KW"/>
</dbReference>
<dbReference type="GO" id="GO:0005615">
    <property type="term" value="C:extracellular space"/>
    <property type="evidence" value="ECO:0000314"/>
    <property type="project" value="MGI"/>
</dbReference>
<dbReference type="GO" id="GO:0032991">
    <property type="term" value="C:protein-containing complex"/>
    <property type="evidence" value="ECO:0000314"/>
    <property type="project" value="MGI"/>
</dbReference>
<dbReference type="GO" id="GO:0042802">
    <property type="term" value="F:identical protein binding"/>
    <property type="evidence" value="ECO:0000314"/>
    <property type="project" value="MGI"/>
</dbReference>
<dbReference type="FunFam" id="2.60.120.40:FF:000029">
    <property type="entry name" value="Complement C1q tumor necrosis factor-related protein 1"/>
    <property type="match status" value="1"/>
</dbReference>
<dbReference type="Gene3D" id="2.60.120.40">
    <property type="match status" value="1"/>
</dbReference>
<dbReference type="InterPro" id="IPR001073">
    <property type="entry name" value="C1q_dom"/>
</dbReference>
<dbReference type="InterPro" id="IPR008160">
    <property type="entry name" value="Collagen"/>
</dbReference>
<dbReference type="InterPro" id="IPR050392">
    <property type="entry name" value="Collagen/C1q_domain"/>
</dbReference>
<dbReference type="InterPro" id="IPR008983">
    <property type="entry name" value="Tumour_necrosis_fac-like_dom"/>
</dbReference>
<dbReference type="PANTHER" id="PTHR15427:SF52">
    <property type="entry name" value="C1Q DOMAIN-CONTAINING PROTEIN"/>
    <property type="match status" value="1"/>
</dbReference>
<dbReference type="PANTHER" id="PTHR15427">
    <property type="entry name" value="EMILIN ELASTIN MICROFIBRIL INTERFACE-LOCATED PROTEIN ELASTIN MICROFIBRIL INTERFACER"/>
    <property type="match status" value="1"/>
</dbReference>
<dbReference type="Pfam" id="PF00386">
    <property type="entry name" value="C1q"/>
    <property type="match status" value="1"/>
</dbReference>
<dbReference type="Pfam" id="PF01391">
    <property type="entry name" value="Collagen"/>
    <property type="match status" value="1"/>
</dbReference>
<dbReference type="PRINTS" id="PR00007">
    <property type="entry name" value="COMPLEMNTC1Q"/>
</dbReference>
<dbReference type="SMART" id="SM00110">
    <property type="entry name" value="C1Q"/>
    <property type="match status" value="1"/>
</dbReference>
<dbReference type="SUPFAM" id="SSF49842">
    <property type="entry name" value="TNF-like"/>
    <property type="match status" value="1"/>
</dbReference>
<dbReference type="PROSITE" id="PS50871">
    <property type="entry name" value="C1Q"/>
    <property type="match status" value="1"/>
</dbReference>
<organism>
    <name type="scientific">Mus musculus</name>
    <name type="common">Mouse</name>
    <dbReference type="NCBI Taxonomy" id="10090"/>
    <lineage>
        <taxon>Eukaryota</taxon>
        <taxon>Metazoa</taxon>
        <taxon>Chordata</taxon>
        <taxon>Craniata</taxon>
        <taxon>Vertebrata</taxon>
        <taxon>Euteleostomi</taxon>
        <taxon>Mammalia</taxon>
        <taxon>Eutheria</taxon>
        <taxon>Euarchontoglires</taxon>
        <taxon>Glires</taxon>
        <taxon>Rodentia</taxon>
        <taxon>Myomorpha</taxon>
        <taxon>Muroidea</taxon>
        <taxon>Muridae</taxon>
        <taxon>Murinae</taxon>
        <taxon>Mus</taxon>
        <taxon>Mus</taxon>
    </lineage>
</organism>
<proteinExistence type="evidence at transcript level"/>
<name>C1QT6_MOUSE</name>
<gene>
    <name type="primary">C1qtnf6</name>
</gene>